<sequence length="678" mass="72873">MVPSTFSRLKAARCLPVVLAALIFAGCGTHTPDQSTAYMQGTAQADSAFYLQQMQQSSDDTRINWQLLAIRALVKEGKTGQAVELFNQLPQELNDTQRREKTLLAAEIKLAQKDFAGAQNLLAKITPADLEQNQQARYWQAKIDASQGRPSIDLLRALIAQEPLLGAKEKQQNIDATWQALSSMTQEQANTLVINADENILQGWLDLQRVWFDNRNDPDMMKAGIADWQKRYPNNPGAKMLPTQLVNVKAFKPASTNKIALLLPLNGQAAVFGRTIQQGFEAAKNIGTQPVVAQVAAAPAADVAEQPQPQTVDGVASPAQASVSDLTGEQPAAQSVPVSAPATSTAAVSAPANPSAELKIYDTSSQPLSQILSQVQQDGASIVVGPLLKNNVEELLKSNTPLNVLALNQPENIENRVNICYFALSPEDEARDAARHIRDQGKQAPLVLIPRSSLGDRVANAFAQEWQKLGGGTVLQQKFGSTSELRAGVNGGSGIALTGSPITPRETTDSGMTTNNPTLQTTPTDDQFTNNGGRVDAVYIVATPGEIAFIKPMIAMRNGSQSGATLYASSRSAQGTAGPDFRLEMEGLQYSEIPMLAGGNLPLMQQALSAVNNDYSLARMYAMGVDAWSLANHFSQMRQVQGFEINGNTGSLTANPDCVINRKLSWLQYQQGQVVPAS</sequence>
<accession>Q8FDA1</accession>
<gene>
    <name evidence="1" type="primary">lpoA</name>
    <name type="ordered locus">c3900</name>
</gene>
<protein>
    <recommendedName>
        <fullName evidence="1">Penicillin-binding protein activator LpoA</fullName>
        <shortName evidence="1">PBP activator LpoA</shortName>
    </recommendedName>
</protein>
<evidence type="ECO:0000255" key="1">
    <source>
        <dbReference type="HAMAP-Rule" id="MF_01890"/>
    </source>
</evidence>
<evidence type="ECO:0000256" key="2">
    <source>
        <dbReference type="SAM" id="MobiDB-lite"/>
    </source>
</evidence>
<evidence type="ECO:0000305" key="3"/>
<proteinExistence type="inferred from homology"/>
<feature type="signal peptide" evidence="1">
    <location>
        <begin position="1"/>
        <end position="26"/>
    </location>
</feature>
<feature type="chain" id="PRO_0000405932" description="Penicillin-binding protein activator LpoA">
    <location>
        <begin position="27"/>
        <end position="678"/>
    </location>
</feature>
<feature type="region of interest" description="Disordered" evidence="2">
    <location>
        <begin position="304"/>
        <end position="338"/>
    </location>
</feature>
<feature type="region of interest" description="Disordered" evidence="2">
    <location>
        <begin position="495"/>
        <end position="530"/>
    </location>
</feature>
<feature type="compositionally biased region" description="Low complexity" evidence="2">
    <location>
        <begin position="513"/>
        <end position="529"/>
    </location>
</feature>
<feature type="lipid moiety-binding region" description="N-palmitoyl cysteine" evidence="1">
    <location>
        <position position="27"/>
    </location>
</feature>
<feature type="lipid moiety-binding region" description="S-diacylglycerol cysteine" evidence="1">
    <location>
        <position position="27"/>
    </location>
</feature>
<keyword id="KW-0998">Cell outer membrane</keyword>
<keyword id="KW-0133">Cell shape</keyword>
<keyword id="KW-0449">Lipoprotein</keyword>
<keyword id="KW-0472">Membrane</keyword>
<keyword id="KW-0564">Palmitate</keyword>
<keyword id="KW-0573">Peptidoglycan synthesis</keyword>
<keyword id="KW-1185">Reference proteome</keyword>
<keyword id="KW-0732">Signal</keyword>
<organism>
    <name type="scientific">Escherichia coli O6:H1 (strain CFT073 / ATCC 700928 / UPEC)</name>
    <dbReference type="NCBI Taxonomy" id="199310"/>
    <lineage>
        <taxon>Bacteria</taxon>
        <taxon>Pseudomonadati</taxon>
        <taxon>Pseudomonadota</taxon>
        <taxon>Gammaproteobacteria</taxon>
        <taxon>Enterobacterales</taxon>
        <taxon>Enterobacteriaceae</taxon>
        <taxon>Escherichia</taxon>
    </lineage>
</organism>
<name>LPOA_ECOL6</name>
<comment type="function">
    <text evidence="1">Regulator of peptidoglycan synthesis that is essential for the function of penicillin-binding protein 1A (PBP1a).</text>
</comment>
<comment type="subunit">
    <text evidence="1">Interacts with PBP1a.</text>
</comment>
<comment type="subcellular location">
    <subcellularLocation>
        <location evidence="1">Cell outer membrane</location>
        <topology evidence="1">Lipid-anchor</topology>
        <orientation evidence="1">Periplasmic side</orientation>
    </subcellularLocation>
</comment>
<comment type="similarity">
    <text evidence="1">Belongs to the LpoA family.</text>
</comment>
<comment type="sequence caution" evidence="3">
    <conflict type="erroneous initiation">
        <sequence resource="EMBL-CDS" id="AAN82341"/>
    </conflict>
    <text>Extended N-terminus.</text>
</comment>
<dbReference type="EMBL" id="AE014075">
    <property type="protein sequence ID" value="AAN82341.1"/>
    <property type="status" value="ALT_INIT"/>
    <property type="molecule type" value="Genomic_DNA"/>
</dbReference>
<dbReference type="RefSeq" id="WP_000249171.1">
    <property type="nucleotide sequence ID" value="NZ_CP051263.1"/>
</dbReference>
<dbReference type="BMRB" id="Q8FDA1"/>
<dbReference type="SMR" id="Q8FDA1"/>
<dbReference type="STRING" id="199310.c3900"/>
<dbReference type="KEGG" id="ecc:c3900"/>
<dbReference type="eggNOG" id="COG3107">
    <property type="taxonomic scope" value="Bacteria"/>
</dbReference>
<dbReference type="HOGENOM" id="CLU_026091_1_1_6"/>
<dbReference type="Proteomes" id="UP000001410">
    <property type="component" value="Chromosome"/>
</dbReference>
<dbReference type="GO" id="GO:0031241">
    <property type="term" value="C:periplasmic side of cell outer membrane"/>
    <property type="evidence" value="ECO:0007669"/>
    <property type="project" value="UniProtKB-UniRule"/>
</dbReference>
<dbReference type="GO" id="GO:0042597">
    <property type="term" value="C:periplasmic space"/>
    <property type="evidence" value="ECO:0007669"/>
    <property type="project" value="InterPro"/>
</dbReference>
<dbReference type="GO" id="GO:0030234">
    <property type="term" value="F:enzyme regulator activity"/>
    <property type="evidence" value="ECO:0007669"/>
    <property type="project" value="UniProtKB-UniRule"/>
</dbReference>
<dbReference type="GO" id="GO:0004553">
    <property type="term" value="F:hydrolase activity, hydrolyzing O-glycosyl compounds"/>
    <property type="evidence" value="ECO:0007669"/>
    <property type="project" value="InterPro"/>
</dbReference>
<dbReference type="GO" id="GO:0009252">
    <property type="term" value="P:peptidoglycan biosynthetic process"/>
    <property type="evidence" value="ECO:0007669"/>
    <property type="project" value="UniProtKB-UniRule"/>
</dbReference>
<dbReference type="GO" id="GO:0008360">
    <property type="term" value="P:regulation of cell shape"/>
    <property type="evidence" value="ECO:0007669"/>
    <property type="project" value="UniProtKB-KW"/>
</dbReference>
<dbReference type="CDD" id="cd06339">
    <property type="entry name" value="PBP1_YraM_LppC_lipoprotein-like"/>
    <property type="match status" value="1"/>
</dbReference>
<dbReference type="FunFam" id="1.25.40.10:FF:000199">
    <property type="entry name" value="Penicillin-binding protein activator LpoA"/>
    <property type="match status" value="1"/>
</dbReference>
<dbReference type="FunFam" id="1.25.40.650:FF:000001">
    <property type="entry name" value="Penicillin-binding protein activator LpoA"/>
    <property type="match status" value="1"/>
</dbReference>
<dbReference type="Gene3D" id="1.25.40.650">
    <property type="match status" value="1"/>
</dbReference>
<dbReference type="Gene3D" id="3.40.50.2300">
    <property type="match status" value="2"/>
</dbReference>
<dbReference type="Gene3D" id="1.25.40.10">
    <property type="entry name" value="Tetratricopeptide repeat domain"/>
    <property type="match status" value="1"/>
</dbReference>
<dbReference type="HAMAP" id="MF_01890">
    <property type="entry name" value="LpoA"/>
    <property type="match status" value="1"/>
</dbReference>
<dbReference type="InterPro" id="IPR007443">
    <property type="entry name" value="LpoA"/>
</dbReference>
<dbReference type="InterPro" id="IPR008939">
    <property type="entry name" value="Lytic_TGlycosylase_superhlx_U"/>
</dbReference>
<dbReference type="InterPro" id="IPR028082">
    <property type="entry name" value="Peripla_BP_I"/>
</dbReference>
<dbReference type="InterPro" id="IPR011990">
    <property type="entry name" value="TPR-like_helical_dom_sf"/>
</dbReference>
<dbReference type="PANTHER" id="PTHR38038">
    <property type="entry name" value="PENICILLIN-BINDING PROTEIN ACTIVATOR LPOA"/>
    <property type="match status" value="1"/>
</dbReference>
<dbReference type="PANTHER" id="PTHR38038:SF1">
    <property type="entry name" value="PENICILLIN-BINDING PROTEIN ACTIVATOR LPOA"/>
    <property type="match status" value="1"/>
</dbReference>
<dbReference type="Pfam" id="PF04348">
    <property type="entry name" value="LppC"/>
    <property type="match status" value="2"/>
</dbReference>
<dbReference type="SUPFAM" id="SSF48435">
    <property type="entry name" value="Bacterial muramidases"/>
    <property type="match status" value="1"/>
</dbReference>
<dbReference type="SUPFAM" id="SSF53822">
    <property type="entry name" value="Periplasmic binding protein-like I"/>
    <property type="match status" value="1"/>
</dbReference>
<reference key="1">
    <citation type="journal article" date="2002" name="Proc. Natl. Acad. Sci. U.S.A.">
        <title>Extensive mosaic structure revealed by the complete genome sequence of uropathogenic Escherichia coli.</title>
        <authorList>
            <person name="Welch R.A."/>
            <person name="Burland V."/>
            <person name="Plunkett G. III"/>
            <person name="Redford P."/>
            <person name="Roesch P."/>
            <person name="Rasko D."/>
            <person name="Buckles E.L."/>
            <person name="Liou S.-R."/>
            <person name="Boutin A."/>
            <person name="Hackett J."/>
            <person name="Stroud D."/>
            <person name="Mayhew G.F."/>
            <person name="Rose D.J."/>
            <person name="Zhou S."/>
            <person name="Schwartz D.C."/>
            <person name="Perna N.T."/>
            <person name="Mobley H.L.T."/>
            <person name="Donnenberg M.S."/>
            <person name="Blattner F.R."/>
        </authorList>
    </citation>
    <scope>NUCLEOTIDE SEQUENCE [LARGE SCALE GENOMIC DNA]</scope>
    <source>
        <strain>CFT073 / ATCC 700928 / UPEC</strain>
    </source>
</reference>